<accession>Q8PZP6</accession>
<keyword id="KW-0067">ATP-binding</keyword>
<keyword id="KW-0436">Ligase</keyword>
<keyword id="KW-0460">Magnesium</keyword>
<keyword id="KW-0479">Metal-binding</keyword>
<keyword id="KW-0520">NAD</keyword>
<keyword id="KW-0547">Nucleotide-binding</keyword>
<sequence>MDLENAQNRIIDFIRDETGRAGVKGVVVGISGGIDSALTATLAVKALGKDRVLGIHMPESSLTPAVDSEDAEALADWLGIEYRTIDISGIISAFMAAVPESESADRLTKGNLKARTRMSLLYFHANRLNRMVIGTGNKTEILLGYYTKYGDGGVDLEPIGGLYKTGVWELSSRLGIPESLITKKPSAGLWAGQTDEADLGISYVKVDEVLKMIEDGVEPEVILDKTGISADQLNSVTRRIERNEHKRKAPPVPELY</sequence>
<organism>
    <name type="scientific">Methanosarcina mazei (strain ATCC BAA-159 / DSM 3647 / Goe1 / Go1 / JCM 11833 / OCM 88)</name>
    <name type="common">Methanosarcina frisia</name>
    <dbReference type="NCBI Taxonomy" id="192952"/>
    <lineage>
        <taxon>Archaea</taxon>
        <taxon>Methanobacteriati</taxon>
        <taxon>Methanobacteriota</taxon>
        <taxon>Stenosarchaea group</taxon>
        <taxon>Methanomicrobia</taxon>
        <taxon>Methanosarcinales</taxon>
        <taxon>Methanosarcinaceae</taxon>
        <taxon>Methanosarcina</taxon>
    </lineage>
</organism>
<feature type="chain" id="PRO_0000152226" description="NH(3)-dependent NAD(+) synthetase">
    <location>
        <begin position="1"/>
        <end position="256"/>
    </location>
</feature>
<feature type="binding site" evidence="1">
    <location>
        <begin position="29"/>
        <end position="36"/>
    </location>
    <ligand>
        <name>ATP</name>
        <dbReference type="ChEBI" id="CHEBI:30616"/>
    </ligand>
</feature>
<feature type="binding site" evidence="1">
    <location>
        <position position="35"/>
    </location>
    <ligand>
        <name>Mg(2+)</name>
        <dbReference type="ChEBI" id="CHEBI:18420"/>
    </ligand>
</feature>
<feature type="binding site" evidence="1">
    <location>
        <position position="115"/>
    </location>
    <ligand>
        <name>deamido-NAD(+)</name>
        <dbReference type="ChEBI" id="CHEBI:58437"/>
    </ligand>
</feature>
<feature type="binding site" evidence="1">
    <location>
        <position position="135"/>
    </location>
    <ligand>
        <name>ATP</name>
        <dbReference type="ChEBI" id="CHEBI:30616"/>
    </ligand>
</feature>
<feature type="binding site" evidence="1">
    <location>
        <position position="140"/>
    </location>
    <ligand>
        <name>Mg(2+)</name>
        <dbReference type="ChEBI" id="CHEBI:18420"/>
    </ligand>
</feature>
<feature type="binding site" evidence="1">
    <location>
        <position position="148"/>
    </location>
    <ligand>
        <name>deamido-NAD(+)</name>
        <dbReference type="ChEBI" id="CHEBI:58437"/>
    </ligand>
</feature>
<feature type="binding site" evidence="1">
    <location>
        <position position="155"/>
    </location>
    <ligand>
        <name>deamido-NAD(+)</name>
        <dbReference type="ChEBI" id="CHEBI:58437"/>
    </ligand>
</feature>
<feature type="binding site" evidence="1">
    <location>
        <position position="164"/>
    </location>
    <ligand>
        <name>ATP</name>
        <dbReference type="ChEBI" id="CHEBI:30616"/>
    </ligand>
</feature>
<feature type="binding site" evidence="1">
    <location>
        <position position="186"/>
    </location>
    <ligand>
        <name>ATP</name>
        <dbReference type="ChEBI" id="CHEBI:30616"/>
    </ligand>
</feature>
<feature type="binding site" evidence="1">
    <location>
        <begin position="245"/>
        <end position="246"/>
    </location>
    <ligand>
        <name>deamido-NAD(+)</name>
        <dbReference type="ChEBI" id="CHEBI:58437"/>
    </ligand>
</feature>
<reference key="1">
    <citation type="journal article" date="2002" name="J. Mol. Microbiol. Biotechnol.">
        <title>The genome of Methanosarcina mazei: evidence for lateral gene transfer between Bacteria and Archaea.</title>
        <authorList>
            <person name="Deppenmeier U."/>
            <person name="Johann A."/>
            <person name="Hartsch T."/>
            <person name="Merkl R."/>
            <person name="Schmitz R.A."/>
            <person name="Martinez-Arias R."/>
            <person name="Henne A."/>
            <person name="Wiezer A."/>
            <person name="Baeumer S."/>
            <person name="Jacobi C."/>
            <person name="Brueggemann H."/>
            <person name="Lienard T."/>
            <person name="Christmann A."/>
            <person name="Boemecke M."/>
            <person name="Steckel S."/>
            <person name="Bhattacharyya A."/>
            <person name="Lykidis A."/>
            <person name="Overbeek R."/>
            <person name="Klenk H.-P."/>
            <person name="Gunsalus R.P."/>
            <person name="Fritz H.-J."/>
            <person name="Gottschalk G."/>
        </authorList>
    </citation>
    <scope>NUCLEOTIDE SEQUENCE [LARGE SCALE GENOMIC DNA]</scope>
    <source>
        <strain>ATCC BAA-159 / DSM 3647 / Goe1 / Go1 / JCM 11833 / OCM 88</strain>
    </source>
</reference>
<protein>
    <recommendedName>
        <fullName evidence="1">NH(3)-dependent NAD(+) synthetase</fullName>
        <ecNumber evidence="1">6.3.1.5</ecNumber>
    </recommendedName>
</protein>
<name>NADE_METMA</name>
<evidence type="ECO:0000255" key="1">
    <source>
        <dbReference type="HAMAP-Rule" id="MF_00193"/>
    </source>
</evidence>
<dbReference type="EC" id="6.3.1.5" evidence="1"/>
<dbReference type="EMBL" id="AE008384">
    <property type="protein sequence ID" value="AAM30142.1"/>
    <property type="molecule type" value="Genomic_DNA"/>
</dbReference>
<dbReference type="RefSeq" id="WP_011032399.1">
    <property type="nucleotide sequence ID" value="NC_003901.1"/>
</dbReference>
<dbReference type="SMR" id="Q8PZP6"/>
<dbReference type="KEGG" id="mma:MM_0446"/>
<dbReference type="PATRIC" id="fig|192952.21.peg.538"/>
<dbReference type="eggNOG" id="arCOG00069">
    <property type="taxonomic scope" value="Archaea"/>
</dbReference>
<dbReference type="HOGENOM" id="CLU_059327_1_1_2"/>
<dbReference type="UniPathway" id="UPA00253">
    <property type="reaction ID" value="UER00333"/>
</dbReference>
<dbReference type="Proteomes" id="UP000000595">
    <property type="component" value="Chromosome"/>
</dbReference>
<dbReference type="GO" id="GO:0005737">
    <property type="term" value="C:cytoplasm"/>
    <property type="evidence" value="ECO:0007669"/>
    <property type="project" value="InterPro"/>
</dbReference>
<dbReference type="GO" id="GO:0005524">
    <property type="term" value="F:ATP binding"/>
    <property type="evidence" value="ECO:0007669"/>
    <property type="project" value="UniProtKB-UniRule"/>
</dbReference>
<dbReference type="GO" id="GO:0004359">
    <property type="term" value="F:glutaminase activity"/>
    <property type="evidence" value="ECO:0007669"/>
    <property type="project" value="InterPro"/>
</dbReference>
<dbReference type="GO" id="GO:0046872">
    <property type="term" value="F:metal ion binding"/>
    <property type="evidence" value="ECO:0007669"/>
    <property type="project" value="UniProtKB-KW"/>
</dbReference>
<dbReference type="GO" id="GO:0003952">
    <property type="term" value="F:NAD+ synthase (glutamine-hydrolyzing) activity"/>
    <property type="evidence" value="ECO:0007669"/>
    <property type="project" value="InterPro"/>
</dbReference>
<dbReference type="GO" id="GO:0008795">
    <property type="term" value="F:NAD+ synthase activity"/>
    <property type="evidence" value="ECO:0007669"/>
    <property type="project" value="UniProtKB-UniRule"/>
</dbReference>
<dbReference type="GO" id="GO:0009435">
    <property type="term" value="P:NAD biosynthetic process"/>
    <property type="evidence" value="ECO:0007669"/>
    <property type="project" value="UniProtKB-UniRule"/>
</dbReference>
<dbReference type="CDD" id="cd00553">
    <property type="entry name" value="NAD_synthase"/>
    <property type="match status" value="1"/>
</dbReference>
<dbReference type="FunFam" id="3.40.50.620:FF:000106">
    <property type="entry name" value="Glutamine-dependent NAD(+) synthetase"/>
    <property type="match status" value="1"/>
</dbReference>
<dbReference type="Gene3D" id="3.40.50.620">
    <property type="entry name" value="HUPs"/>
    <property type="match status" value="1"/>
</dbReference>
<dbReference type="HAMAP" id="MF_00193">
    <property type="entry name" value="NadE_ammonia_dep"/>
    <property type="match status" value="1"/>
</dbReference>
<dbReference type="InterPro" id="IPR022310">
    <property type="entry name" value="NAD/GMP_synthase"/>
</dbReference>
<dbReference type="InterPro" id="IPR003694">
    <property type="entry name" value="NAD_synthase"/>
</dbReference>
<dbReference type="InterPro" id="IPR022926">
    <property type="entry name" value="NH(3)-dep_NAD(+)_synth"/>
</dbReference>
<dbReference type="InterPro" id="IPR014729">
    <property type="entry name" value="Rossmann-like_a/b/a_fold"/>
</dbReference>
<dbReference type="NCBIfam" id="TIGR00552">
    <property type="entry name" value="nadE"/>
    <property type="match status" value="1"/>
</dbReference>
<dbReference type="NCBIfam" id="NF010587">
    <property type="entry name" value="PRK13980.1"/>
    <property type="match status" value="1"/>
</dbReference>
<dbReference type="PANTHER" id="PTHR23090:SF9">
    <property type="entry name" value="GLUTAMINE-DEPENDENT NAD(+) SYNTHETASE"/>
    <property type="match status" value="1"/>
</dbReference>
<dbReference type="PANTHER" id="PTHR23090">
    <property type="entry name" value="NH 3 /GLUTAMINE-DEPENDENT NAD + SYNTHETASE"/>
    <property type="match status" value="1"/>
</dbReference>
<dbReference type="Pfam" id="PF02540">
    <property type="entry name" value="NAD_synthase"/>
    <property type="match status" value="1"/>
</dbReference>
<dbReference type="SUPFAM" id="SSF52402">
    <property type="entry name" value="Adenine nucleotide alpha hydrolases-like"/>
    <property type="match status" value="1"/>
</dbReference>
<comment type="function">
    <text evidence="1">Catalyzes the ATP-dependent amidation of deamido-NAD to form NAD. Uses ammonia as a nitrogen source.</text>
</comment>
<comment type="catalytic activity">
    <reaction evidence="1">
        <text>deamido-NAD(+) + NH4(+) + ATP = AMP + diphosphate + NAD(+) + H(+)</text>
        <dbReference type="Rhea" id="RHEA:21188"/>
        <dbReference type="ChEBI" id="CHEBI:15378"/>
        <dbReference type="ChEBI" id="CHEBI:28938"/>
        <dbReference type="ChEBI" id="CHEBI:30616"/>
        <dbReference type="ChEBI" id="CHEBI:33019"/>
        <dbReference type="ChEBI" id="CHEBI:57540"/>
        <dbReference type="ChEBI" id="CHEBI:58437"/>
        <dbReference type="ChEBI" id="CHEBI:456215"/>
        <dbReference type="EC" id="6.3.1.5"/>
    </reaction>
</comment>
<comment type="pathway">
    <text evidence="1">Cofactor biosynthesis; NAD(+) biosynthesis; NAD(+) from deamido-NAD(+) (ammonia route): step 1/1.</text>
</comment>
<comment type="subunit">
    <text evidence="1">Homodimer.</text>
</comment>
<comment type="similarity">
    <text evidence="1">Belongs to the NAD synthetase family.</text>
</comment>
<gene>
    <name evidence="1" type="primary">nadE</name>
    <name type="ordered locus">MM_0446</name>
</gene>
<proteinExistence type="inferred from homology"/>